<feature type="signal peptide" evidence="2">
    <location>
        <begin position="1"/>
        <end position="26"/>
    </location>
</feature>
<feature type="peptide" id="PRO_0000249965" description="Potassium channel toxin alpha-KTx 18.3" evidence="2">
    <location>
        <begin position="27"/>
        <end position="62"/>
    </location>
</feature>
<feature type="disulfide bond" evidence="1">
    <location>
        <begin position="34"/>
        <end position="53"/>
    </location>
</feature>
<feature type="disulfide bond" evidence="1">
    <location>
        <begin position="39"/>
        <end position="58"/>
    </location>
</feature>
<feature type="disulfide bond" evidence="1">
    <location>
        <begin position="43"/>
        <end position="60"/>
    </location>
</feature>
<keyword id="KW-0903">Direct protein sequencing</keyword>
<keyword id="KW-1015">Disulfide bond</keyword>
<keyword id="KW-0872">Ion channel impairing toxin</keyword>
<keyword id="KW-0528">Neurotoxin</keyword>
<keyword id="KW-0632">Potassium channel impairing toxin</keyword>
<keyword id="KW-0964">Secreted</keyword>
<keyword id="KW-0732">Signal</keyword>
<keyword id="KW-0800">Toxin</keyword>
<keyword id="KW-1220">Voltage-gated potassium channel impairing toxin</keyword>
<comment type="function">
    <text evidence="5">Probable voltage-gated potassium channel inhibitor.</text>
</comment>
<comment type="subcellular location">
    <subcellularLocation>
        <location evidence="2">Secreted</location>
    </subcellularLocation>
</comment>
<comment type="tissue specificity">
    <text evidence="4">Expressed by the venom gland.</text>
</comment>
<comment type="domain">
    <text evidence="1">Has the structural arrangement of an alpha-helix connected to a beta-sheet by disulfide bonds (CSalpha/beta).</text>
</comment>
<comment type="mass spectrometry" mass="3831.4" method="Electrospray" evidence="2"/>
<comment type="miscellaneous">
    <text evidence="2">Negative results: does not block or only poorly Shaker B and Kv1.3/KCNA3 potassium channels.</text>
</comment>
<comment type="similarity">
    <text evidence="4">Belongs to the short scorpion toxin superfamily. Potassium channel inhibitor family. Alpha-KTx 18 subfamily.</text>
</comment>
<comment type="caution">
    <text evidence="4">Lacks the dyad motif characteristic of alpha-KTx and generally associated with channel blockage.</text>
</comment>
<accession>P0C1X6</accession>
<accession>C9X4J3</accession>
<evidence type="ECO:0000250" key="1">
    <source>
        <dbReference type="UniProtKB" id="P60211"/>
    </source>
</evidence>
<evidence type="ECO:0000269" key="2">
    <source>
    </source>
</evidence>
<evidence type="ECO:0000303" key="3">
    <source>
    </source>
</evidence>
<evidence type="ECO:0000305" key="4"/>
<evidence type="ECO:0000305" key="5">
    <source>
    </source>
</evidence>
<reference key="1">
    <citation type="journal article" date="2009" name="Biochimie">
        <title>Molecular cloning and nucleotide sequence analysis of genes from a cDNA library of the scorpion Tityus discrepans.</title>
        <authorList>
            <person name="D'Suze G."/>
            <person name="Schwartz E.F."/>
            <person name="Garcia-Gomez B.I."/>
            <person name="Sevcik C."/>
            <person name="Possani L.D."/>
        </authorList>
    </citation>
    <scope>NUCLEOTIDE SEQUENCE [MRNA]</scope>
    <source>
        <tissue>Venom gland</tissue>
    </source>
</reference>
<reference key="2">
    <citation type="journal article" date="2006" name="Proteomics">
        <title>Proteomic analysis of Tityus discrepans scorpion venom and amino acid sequence of novel toxins.</title>
        <authorList>
            <person name="Batista C.V.F."/>
            <person name="D'Suze G."/>
            <person name="Gomez-Lagunas F."/>
            <person name="Zamudio F.Z."/>
            <person name="Encarnacion S."/>
            <person name="Sevcik C."/>
            <person name="Possani L.D."/>
        </authorList>
    </citation>
    <scope>PROTEIN SEQUENCE OF 27-62</scope>
    <scope>MASS SPECTROMETRY</scope>
    <scope>SUBCELLULAR LOCATION</scope>
    <source>
        <tissue>Venom</tissue>
    </source>
</reference>
<reference key="3">
    <citation type="journal article" date="2012" name="Biochemistry">
        <title>Looking over toxin-K(+) channel interactions. Clues from the structural and functional characterization of alpha-KTx toxin Tc32, a Kv1.3 channel blocker.</title>
        <authorList>
            <person name="Stehling E.G."/>
            <person name="Sforca M.L."/>
            <person name="Zanchin N.I."/>
            <person name="Oyama S. Jr."/>
            <person name="Pignatelli A."/>
            <person name="Belluzzi O."/>
            <person name="Polverini E."/>
            <person name="Corsini R."/>
            <person name="Spisni A."/>
            <person name="Pertinhez T.A."/>
        </authorList>
    </citation>
    <scope>3D-STRUCTURE MODELING</scope>
</reference>
<protein>
    <recommendedName>
        <fullName>Potassium channel toxin alpha-KTx 18.3</fullName>
    </recommendedName>
    <alternativeName>
        <fullName evidence="3">Toxin TdK3</fullName>
    </alternativeName>
</protein>
<dbReference type="EMBL" id="FN392271">
    <property type="protein sequence ID" value="CAY61914.1"/>
    <property type="molecule type" value="mRNA"/>
</dbReference>
<dbReference type="SMR" id="P0C1X6"/>
<dbReference type="GO" id="GO:0005576">
    <property type="term" value="C:extracellular region"/>
    <property type="evidence" value="ECO:0007669"/>
    <property type="project" value="UniProtKB-SubCell"/>
</dbReference>
<dbReference type="GO" id="GO:0015459">
    <property type="term" value="F:potassium channel regulator activity"/>
    <property type="evidence" value="ECO:0007669"/>
    <property type="project" value="UniProtKB-KW"/>
</dbReference>
<dbReference type="GO" id="GO:0090729">
    <property type="term" value="F:toxin activity"/>
    <property type="evidence" value="ECO:0007669"/>
    <property type="project" value="UniProtKB-KW"/>
</dbReference>
<sequence length="62" mass="6633">MHFSGVAFILISMVLIGSIFETTVEAGEGPKSDCKPDLCEAACKDLGKPMDFCKDGTCKCKD</sequence>
<organism>
    <name type="scientific">Tityus discrepans</name>
    <name type="common">Venezuelan scorpion</name>
    <dbReference type="NCBI Taxonomy" id="57059"/>
    <lineage>
        <taxon>Eukaryota</taxon>
        <taxon>Metazoa</taxon>
        <taxon>Ecdysozoa</taxon>
        <taxon>Arthropoda</taxon>
        <taxon>Chelicerata</taxon>
        <taxon>Arachnida</taxon>
        <taxon>Scorpiones</taxon>
        <taxon>Buthida</taxon>
        <taxon>Buthoidea</taxon>
        <taxon>Buthidae</taxon>
        <taxon>Tityus</taxon>
    </lineage>
</organism>
<name>KA183_TITDI</name>
<proteinExistence type="evidence at protein level"/>